<evidence type="ECO:0000250" key="1">
    <source>
        <dbReference type="UniProtKB" id="O94649"/>
    </source>
</evidence>
<evidence type="ECO:0000250" key="2">
    <source>
        <dbReference type="UniProtKB" id="P53855"/>
    </source>
</evidence>
<evidence type="ECO:0000256" key="3">
    <source>
        <dbReference type="SAM" id="MobiDB-lite"/>
    </source>
</evidence>
<evidence type="ECO:0000305" key="4"/>
<dbReference type="EMBL" id="AAFW02000067">
    <property type="protein sequence ID" value="EDN62583.1"/>
    <property type="molecule type" value="Genomic_DNA"/>
</dbReference>
<dbReference type="SMR" id="A6ZRK1"/>
<dbReference type="HOGENOM" id="CLU_000626_3_0_1"/>
<dbReference type="OrthoDB" id="28139at4893"/>
<dbReference type="Proteomes" id="UP000007060">
    <property type="component" value="Unassembled WGS sequence"/>
</dbReference>
<dbReference type="GO" id="GO:0005789">
    <property type="term" value="C:endoplasmic reticulum membrane"/>
    <property type="evidence" value="ECO:0007669"/>
    <property type="project" value="UniProtKB-SubCell"/>
</dbReference>
<dbReference type="GO" id="GO:0061908">
    <property type="term" value="C:phagophore"/>
    <property type="evidence" value="ECO:0007669"/>
    <property type="project" value="TreeGrafter"/>
</dbReference>
<dbReference type="GO" id="GO:0034045">
    <property type="term" value="C:phagophore assembly site membrane"/>
    <property type="evidence" value="ECO:0007669"/>
    <property type="project" value="UniProtKB-SubCell"/>
</dbReference>
<dbReference type="GO" id="GO:0032266">
    <property type="term" value="F:phosphatidylinositol-3-phosphate binding"/>
    <property type="evidence" value="ECO:0007669"/>
    <property type="project" value="TreeGrafter"/>
</dbReference>
<dbReference type="GO" id="GO:0043495">
    <property type="term" value="F:protein-membrane adaptor activity"/>
    <property type="evidence" value="ECO:0007669"/>
    <property type="project" value="TreeGrafter"/>
</dbReference>
<dbReference type="GO" id="GO:0000045">
    <property type="term" value="P:autophagosome assembly"/>
    <property type="evidence" value="ECO:0007669"/>
    <property type="project" value="TreeGrafter"/>
</dbReference>
<dbReference type="GO" id="GO:0000422">
    <property type="term" value="P:autophagy of mitochondrion"/>
    <property type="evidence" value="ECO:0007669"/>
    <property type="project" value="TreeGrafter"/>
</dbReference>
<dbReference type="GO" id="GO:0061723">
    <property type="term" value="P:glycophagy"/>
    <property type="evidence" value="ECO:0007669"/>
    <property type="project" value="TreeGrafter"/>
</dbReference>
<dbReference type="GO" id="GO:0006869">
    <property type="term" value="P:lipid transport"/>
    <property type="evidence" value="ECO:0007669"/>
    <property type="project" value="UniProtKB-KW"/>
</dbReference>
<dbReference type="GO" id="GO:0034727">
    <property type="term" value="P:piecemeal microautophagy of the nucleus"/>
    <property type="evidence" value="ECO:0007669"/>
    <property type="project" value="TreeGrafter"/>
</dbReference>
<dbReference type="GO" id="GO:0015031">
    <property type="term" value="P:protein transport"/>
    <property type="evidence" value="ECO:0007669"/>
    <property type="project" value="UniProtKB-KW"/>
</dbReference>
<dbReference type="GO" id="GO:0061709">
    <property type="term" value="P:reticulophagy"/>
    <property type="evidence" value="ECO:0007669"/>
    <property type="project" value="TreeGrafter"/>
</dbReference>
<dbReference type="InterPro" id="IPR026849">
    <property type="entry name" value="ATG2"/>
</dbReference>
<dbReference type="PANTHER" id="PTHR13190">
    <property type="entry name" value="AUTOPHAGY-RELATED 2, ISOFORM A"/>
    <property type="match status" value="1"/>
</dbReference>
<dbReference type="PANTHER" id="PTHR13190:SF1">
    <property type="entry name" value="AUTOPHAGY-RELATED 2, ISOFORM A"/>
    <property type="match status" value="1"/>
</dbReference>
<dbReference type="Pfam" id="PF13329">
    <property type="entry name" value="ATG2_CAD"/>
    <property type="match status" value="1"/>
</dbReference>
<protein>
    <recommendedName>
        <fullName>Autophagy-related protein 2</fullName>
    </recommendedName>
</protein>
<gene>
    <name type="primary">ATG2</name>
    <name type="ORF">SCY_4562</name>
</gene>
<reference key="1">
    <citation type="journal article" date="2007" name="Proc. Natl. Acad. Sci. U.S.A.">
        <title>Genome sequencing and comparative analysis of Saccharomyces cerevisiae strain YJM789.</title>
        <authorList>
            <person name="Wei W."/>
            <person name="McCusker J.H."/>
            <person name="Hyman R.W."/>
            <person name="Jones T."/>
            <person name="Ning Y."/>
            <person name="Cao Z."/>
            <person name="Gu Z."/>
            <person name="Bruno D."/>
            <person name="Miranda M."/>
            <person name="Nguyen M."/>
            <person name="Wilhelmy J."/>
            <person name="Komp C."/>
            <person name="Tamse R."/>
            <person name="Wang X."/>
            <person name="Jia P."/>
            <person name="Luedi P."/>
            <person name="Oefner P.J."/>
            <person name="David L."/>
            <person name="Dietrich F.S."/>
            <person name="Li Y."/>
            <person name="Davis R.W."/>
            <person name="Steinmetz L.M."/>
        </authorList>
    </citation>
    <scope>NUCLEOTIDE SEQUENCE [LARGE SCALE GENOMIC DNA]</scope>
    <source>
        <strain>YJM789</strain>
    </source>
</reference>
<accession>A6ZRK1</accession>
<comment type="function">
    <text evidence="2">Lipid transfer protein required for autophagosome completion and peroxisome degradation. Tethers the edge of the isolation membrane (IM) to the endoplasmic reticulum (ER) and mediates direct lipid transfer from ER to IM for IM expansion. ATG2 binds to the ER exit site (ERES), which is the membrane source for autophagosome formation, using basic residues in its N-terminal region (NR) and to the expanding edge of the IM through its C-terminal region. The latter binding is assisted by an ATG18-PtdIns3P interaction. ATG2 then extracts phospholipids from the membrane source using its NR and transfers them to ATG9 to the IM through its predicted beta-sheet-rich structure for membrane expansion.</text>
</comment>
<comment type="catalytic activity">
    <reaction evidence="1">
        <text>a 1,2-diacyl-sn-glycero-3-phosphocholine(in) = a 1,2-diacyl-sn-glycero-3-phosphocholine(out)</text>
        <dbReference type="Rhea" id="RHEA:38571"/>
        <dbReference type="ChEBI" id="CHEBI:57643"/>
    </reaction>
</comment>
<comment type="catalytic activity">
    <reaction evidence="1">
        <text>a 1,2-diacyl-sn-glycero-3-phospho-L-serine(in) = a 1,2-diacyl-sn-glycero-3-phospho-L-serine(out)</text>
        <dbReference type="Rhea" id="RHEA:38663"/>
        <dbReference type="ChEBI" id="CHEBI:57262"/>
    </reaction>
</comment>
<comment type="catalytic activity">
    <reaction evidence="1">
        <text>a 1,2-diacyl-sn-glycero-3-phosphoethanolamine(in) = a 1,2-diacyl-sn-glycero-3-phosphoethanolamine(out)</text>
        <dbReference type="Rhea" id="RHEA:38895"/>
        <dbReference type="ChEBI" id="CHEBI:64612"/>
    </reaction>
</comment>
<comment type="subcellular location">
    <subcellularLocation>
        <location evidence="2">Preautophagosomal structure membrane</location>
        <topology evidence="2">Peripheral membrane protein</topology>
    </subcellularLocation>
    <subcellularLocation>
        <location evidence="2">Endoplasmic reticulum membrane</location>
        <topology evidence="2">Peripheral membrane protein</topology>
    </subcellularLocation>
</comment>
<comment type="similarity">
    <text evidence="4">Belongs to the ATG2 family.</text>
</comment>
<sequence>MAFWLPQNIQKRLLLYVLQQISLFSNIDLSNLDVSIGSKSHFSFHDVNLSLDDLNIPNVQINEGIVDELVLKLTVSGGVEIDGSGLRFIMTPLYSSGSQELHSDFLVKSIQDLTNSMLQFSDPLTTYNRYKEDDISSSDSSSDLNSNIEASKPAANGSYTLQNMRNKALNVALAKLKIALKDVTIRFIVNDRDPSDNIVEVHLESIQLITTDANLRHINIENITISSIQKQAVPDSPVHPFNNDDLSQSVYLSKMEATSLYMSAMEEQSNEDPSEPQVTQEEQENDKCKESLMEINNLNIAFKGLSSVNDLRMSNIVIDIQDVHLAIHKIVEIKNSTLKNIIDIIVTHLDANESFSCQDSQSPSPDKQEPSALSSVDIKCIYLNLGQDITVILKSFKLEQKENNSLAFSLGSFYSNSSPLTISHKTKPLLTGEQTPQSIALNMGDELDIIISHDGIAHFFKIFQFVSKCMSFYQNKSKGMMPQIASDTKRTVQLTSKAVKLSLKFPYFLLCFQVSPFIYDSNRELYIELVDVFKKLPSRCTKILTMSSITISNLQSPLQLGSYDDTLKEALIYSSVHAIIKEVIFNEEYSGIVQLVEDISAFGKLFTDSKNSECTGKSKSKRGSFLQRSVRVLNSSRFVYKQSLSANFSLKIDSMKLKVSEIIGPQFGSVEALLSNNFFAITDDSQIVYFTKNLKVERKTPSLLEPQEIMSVVLNKAVNEPVLYVHRRANGKLKVIFNNIRIHYYARWLEILKKNIGPDNASSKDEPVAQKLSKKQPTSGFPWELKCLDCSLILHPFRLKSVMVIVLDNLTTGGSSFIPQAKLLSKANTLFLIDDYQNFKIQKDKNWPSLINFYAGQGFSAIGKIDTLNFLINKSDGALLLDCKIEQVGLSLCADSFQTFCQLCIDLKYPQTFPDEEKFRTQLKNPIDVFKDIDCDLFNSAFIRENNHQNDYDSVHLVDSFLDKTHEFNNGARSKLSSQGSYEMDSSSGTATGGILLPHESYLDSAQPKEEDTPPIASKEQERDVDIRGSIDIEKVVIKLFDGYDWKYTRKFIANTVEKLDKELSKAEASSSKSNVPQSEANIFDSIYISANKNNVTDLRRNLDGEIQGVQNSFSDVSKVNLRPSKHYKALIQLNKVHVNLKNYRVDEPDESNSDNSTDVLNRCVVSVYEFEIIDNVPTSTWNKFVTLLKHEPWPHSSPMFLLDLEFIRPIDFLQAVELVMQLNVAPLRLHVDQDTLEFLIRFLGFKDKRFELIDEYPDIVFIQKFSTNSIKLRLDYKPKKVDYAGLRSGQTSELMNFFTLDGSKIILKSVVLYGLNGFDELNNKLKAIWTPDITKKQLPGVLEGLAPVRSFMAIGSGVKTLVTVLMSEYRQEGHLGRSLKKGGNVFLKTTTGDFVKLGVKLTSGTQAILENTEELFGGVGSNGRVYDASKFGSADGADSDTAAVLDLDTLFEEDQLVGSKYSRIRDHEPTAVVIDMSSPGDHNEPTIVSLYADQPLDLPTGLKEAYSSLEKHMHIAYDAVWRAKGQMKDDKRGGPSAAAVYVARAAPVAIIRPLIGATEAVSKTLQGIANQVDKTHNEQINDKYKSNRTDS</sequence>
<feature type="chain" id="PRO_0000317816" description="Autophagy-related protein 2">
    <location>
        <begin position="1"/>
        <end position="1592"/>
    </location>
</feature>
<feature type="region of interest" description="Disordered" evidence="3">
    <location>
        <begin position="264"/>
        <end position="286"/>
    </location>
</feature>
<feature type="modified residue" description="Phosphoserine" evidence="2">
    <location>
        <position position="236"/>
    </location>
</feature>
<organism>
    <name type="scientific">Saccharomyces cerevisiae (strain YJM789)</name>
    <name type="common">Baker's yeast</name>
    <dbReference type="NCBI Taxonomy" id="307796"/>
    <lineage>
        <taxon>Eukaryota</taxon>
        <taxon>Fungi</taxon>
        <taxon>Dikarya</taxon>
        <taxon>Ascomycota</taxon>
        <taxon>Saccharomycotina</taxon>
        <taxon>Saccharomycetes</taxon>
        <taxon>Saccharomycetales</taxon>
        <taxon>Saccharomycetaceae</taxon>
        <taxon>Saccharomyces</taxon>
    </lineage>
</organism>
<proteinExistence type="inferred from homology"/>
<name>ATG2_YEAS7</name>
<keyword id="KW-0072">Autophagy</keyword>
<keyword id="KW-0256">Endoplasmic reticulum</keyword>
<keyword id="KW-0445">Lipid transport</keyword>
<keyword id="KW-0472">Membrane</keyword>
<keyword id="KW-0597">Phosphoprotein</keyword>
<keyword id="KW-0653">Protein transport</keyword>
<keyword id="KW-0813">Transport</keyword>